<gene>
    <name type="primary">arpc1a-a</name>
    <name evidence="7" type="ORF">XELAEV_18047443mg</name>
</gene>
<feature type="chain" id="PRO_0000445567" description="Actin-related protein 2/3 complex subunit 1A-A">
    <location>
        <begin position="1"/>
        <end position="370"/>
    </location>
</feature>
<feature type="repeat" description="WD 1" evidence="2">
    <location>
        <begin position="6"/>
        <end position="45"/>
    </location>
</feature>
<feature type="repeat" description="WD 2" evidence="2">
    <location>
        <begin position="50"/>
        <end position="89"/>
    </location>
</feature>
<feature type="repeat" description="WD 3" evidence="2">
    <location>
        <begin position="140"/>
        <end position="179"/>
    </location>
</feature>
<feature type="repeat" description="WD 4" evidence="2">
    <location>
        <begin position="202"/>
        <end position="241"/>
    </location>
</feature>
<feature type="repeat" description="WD 5" evidence="2">
    <location>
        <begin position="244"/>
        <end position="284"/>
    </location>
</feature>
<feature type="repeat" description="WD 6" evidence="2">
    <location>
        <begin position="322"/>
        <end position="365"/>
    </location>
</feature>
<organism evidence="6">
    <name type="scientific">Xenopus laevis</name>
    <name type="common">African clawed frog</name>
    <dbReference type="NCBI Taxonomy" id="8355"/>
    <lineage>
        <taxon>Eukaryota</taxon>
        <taxon>Metazoa</taxon>
        <taxon>Chordata</taxon>
        <taxon>Craniata</taxon>
        <taxon>Vertebrata</taxon>
        <taxon>Euteleostomi</taxon>
        <taxon>Amphibia</taxon>
        <taxon>Batrachia</taxon>
        <taxon>Anura</taxon>
        <taxon>Pipoidea</taxon>
        <taxon>Pipidae</taxon>
        <taxon>Xenopodinae</taxon>
        <taxon>Xenopus</taxon>
        <taxon>Xenopus</taxon>
    </lineage>
</organism>
<protein>
    <recommendedName>
        <fullName evidence="4">Actin-related protein 2/3 complex subunit 1A-A</fullName>
    </recommendedName>
</protein>
<comment type="function">
    <text evidence="1 5">Probably functions as a component of the Arp2/3 complex which is involved in regulation of actin polymerization and together with an activating nucleation-promoting factor (NPF) mediates the formation of branched actin networks (By similarity). In addition to its role in the cytoplasmic cytoskeleton, the Arp2/3 complex also promotes actin polymerization in the nucleus, thereby regulating gene transcription and repair of damaged DNA (Probable).</text>
</comment>
<comment type="subunit">
    <text evidence="3">Component of the Arp2/3 complex.</text>
</comment>
<comment type="subcellular location">
    <subcellularLocation>
        <location evidence="1">Cytoplasm</location>
        <location evidence="1">Cytoskeleton</location>
    </subcellularLocation>
    <subcellularLocation>
        <location evidence="3">Nucleus</location>
    </subcellularLocation>
</comment>
<comment type="similarity">
    <text evidence="4">Belongs to the WD repeat ARPC1 family.</text>
</comment>
<keyword id="KW-0009">Actin-binding</keyword>
<keyword id="KW-0963">Cytoplasm</keyword>
<keyword id="KW-0206">Cytoskeleton</keyword>
<keyword id="KW-0539">Nucleus</keyword>
<keyword id="KW-1185">Reference proteome</keyword>
<keyword id="KW-0677">Repeat</keyword>
<keyword id="KW-0853">WD repeat</keyword>
<dbReference type="EMBL" id="CM004483">
    <property type="protein sequence ID" value="OCT61420.1"/>
    <property type="molecule type" value="Genomic_DNA"/>
</dbReference>
<dbReference type="EMBL" id="BC041267">
    <property type="protein sequence ID" value="AAH41267.1"/>
    <property type="molecule type" value="mRNA"/>
</dbReference>
<dbReference type="EMBL" id="BC106316">
    <property type="protein sequence ID" value="AAI06317.1"/>
    <property type="molecule type" value="mRNA"/>
</dbReference>
<dbReference type="RefSeq" id="NP_001080153.1">
    <property type="nucleotide sequence ID" value="NM_001086684.1"/>
</dbReference>
<dbReference type="SMR" id="Q8AVT9"/>
<dbReference type="STRING" id="8355.Q8AVT9"/>
<dbReference type="PaxDb" id="8355-Q8AVT9"/>
<dbReference type="DNASU" id="379845"/>
<dbReference type="GeneID" id="379845"/>
<dbReference type="KEGG" id="xla:379845"/>
<dbReference type="AGR" id="Xenbase:XB-GENE-6254683"/>
<dbReference type="CTD" id="379845"/>
<dbReference type="Xenbase" id="XB-GENE-6254683">
    <property type="gene designation" value="arpc1a.S"/>
</dbReference>
<dbReference type="OMA" id="EIHIFEW"/>
<dbReference type="OrthoDB" id="406844at2759"/>
<dbReference type="Proteomes" id="UP000186698">
    <property type="component" value="Chromosome 9_10S"/>
</dbReference>
<dbReference type="Proteomes" id="UP000694892">
    <property type="component" value="Chromosome 9_10S"/>
</dbReference>
<dbReference type="Bgee" id="379845">
    <property type="expression patterns" value="Expressed in testis and 19 other cell types or tissues"/>
</dbReference>
<dbReference type="GO" id="GO:0005885">
    <property type="term" value="C:Arp2/3 protein complex"/>
    <property type="evidence" value="ECO:0000314"/>
    <property type="project" value="UniProtKB"/>
</dbReference>
<dbReference type="GO" id="GO:0005737">
    <property type="term" value="C:cytoplasm"/>
    <property type="evidence" value="ECO:0007669"/>
    <property type="project" value="UniProtKB-KW"/>
</dbReference>
<dbReference type="GO" id="GO:0005634">
    <property type="term" value="C:nucleus"/>
    <property type="evidence" value="ECO:0000314"/>
    <property type="project" value="UniProtKB"/>
</dbReference>
<dbReference type="GO" id="GO:0035861">
    <property type="term" value="C:site of double-strand break"/>
    <property type="evidence" value="ECO:0000314"/>
    <property type="project" value="UniProtKB"/>
</dbReference>
<dbReference type="GO" id="GO:0051015">
    <property type="term" value="F:actin filament binding"/>
    <property type="evidence" value="ECO:0000318"/>
    <property type="project" value="GO_Central"/>
</dbReference>
<dbReference type="GO" id="GO:0034314">
    <property type="term" value="P:Arp2/3 complex-mediated actin nucleation"/>
    <property type="evidence" value="ECO:0000318"/>
    <property type="project" value="GO_Central"/>
</dbReference>
<dbReference type="FunFam" id="2.130.10.10:FF:000030">
    <property type="entry name" value="Actin-related protein 2/3 complex subunit"/>
    <property type="match status" value="1"/>
</dbReference>
<dbReference type="Gene3D" id="2.130.10.10">
    <property type="entry name" value="YVTN repeat-like/Quinoprotein amine dehydrogenase"/>
    <property type="match status" value="1"/>
</dbReference>
<dbReference type="InterPro" id="IPR017383">
    <property type="entry name" value="ARPC1"/>
</dbReference>
<dbReference type="InterPro" id="IPR015943">
    <property type="entry name" value="WD40/YVTN_repeat-like_dom_sf"/>
</dbReference>
<dbReference type="InterPro" id="IPR036322">
    <property type="entry name" value="WD40_repeat_dom_sf"/>
</dbReference>
<dbReference type="InterPro" id="IPR001680">
    <property type="entry name" value="WD40_rpt"/>
</dbReference>
<dbReference type="PANTHER" id="PTHR10709">
    <property type="entry name" value="ACTIN-RELATED PROTEIN 2/3 COMPLEX SUBUNIT 1"/>
    <property type="match status" value="1"/>
</dbReference>
<dbReference type="PANTHER" id="PTHR10709:SF11">
    <property type="entry name" value="ACTIN-RELATED PROTEIN 2_3 COMPLEX SUBUNIT 1A"/>
    <property type="match status" value="1"/>
</dbReference>
<dbReference type="Pfam" id="PF00400">
    <property type="entry name" value="WD40"/>
    <property type="match status" value="2"/>
</dbReference>
<dbReference type="PIRSF" id="PIRSF038093">
    <property type="entry name" value="ARP2/3_su1"/>
    <property type="match status" value="1"/>
</dbReference>
<dbReference type="SMART" id="SM00320">
    <property type="entry name" value="WD40"/>
    <property type="match status" value="5"/>
</dbReference>
<dbReference type="SUPFAM" id="SSF50978">
    <property type="entry name" value="WD40 repeat-like"/>
    <property type="match status" value="1"/>
</dbReference>
<dbReference type="PROSITE" id="PS50082">
    <property type="entry name" value="WD_REPEATS_2"/>
    <property type="match status" value="1"/>
</dbReference>
<dbReference type="PROSITE" id="PS50294">
    <property type="entry name" value="WD_REPEATS_REGION"/>
    <property type="match status" value="1"/>
</dbReference>
<reference key="1">
    <citation type="journal article" date="2016" name="Nature">
        <title>Genome evolution in the allotetraploid frog Xenopus laevis.</title>
        <authorList>
            <person name="Session A.M."/>
            <person name="Uno Y."/>
            <person name="Kwon T."/>
            <person name="Chapman J.A."/>
            <person name="Toyoda A."/>
            <person name="Takahashi S."/>
            <person name="Fukui A."/>
            <person name="Hikosaka A."/>
            <person name="Suzuki A."/>
            <person name="Kondo M."/>
            <person name="van Heeringen S.J."/>
            <person name="Quigley I."/>
            <person name="Heinz S."/>
            <person name="Ogino H."/>
            <person name="Ochi H."/>
            <person name="Hellsten U."/>
            <person name="Lyons J.B."/>
            <person name="Simakov O."/>
            <person name="Putnam N."/>
            <person name="Stites J."/>
            <person name="Kuroki Y."/>
            <person name="Tanaka T."/>
            <person name="Michiue T."/>
            <person name="Watanabe M."/>
            <person name="Bogdanovic O."/>
            <person name="Lister R."/>
            <person name="Georgiou G."/>
            <person name="Paranjpe S.S."/>
            <person name="van Kruijsbergen I."/>
            <person name="Shu S."/>
            <person name="Carlson J."/>
            <person name="Kinoshita T."/>
            <person name="Ohta Y."/>
            <person name="Mawaribuchi S."/>
            <person name="Jenkins J."/>
            <person name="Grimwood J."/>
            <person name="Schmutz J."/>
            <person name="Mitros T."/>
            <person name="Mozaffari S.V."/>
            <person name="Suzuki Y."/>
            <person name="Haramoto Y."/>
            <person name="Yamamoto T.S."/>
            <person name="Takagi C."/>
            <person name="Heald R."/>
            <person name="Miller K."/>
            <person name="Haudenschild C."/>
            <person name="Kitzman J."/>
            <person name="Nakayama T."/>
            <person name="Izutsu Y."/>
            <person name="Robert J."/>
            <person name="Fortriede J."/>
            <person name="Burns K."/>
            <person name="Lotay V."/>
            <person name="Karimi K."/>
            <person name="Yasuoka Y."/>
            <person name="Dichmann D.S."/>
            <person name="Flajnik M.F."/>
            <person name="Houston D.W."/>
            <person name="Shendure J."/>
            <person name="DuPasquier L."/>
            <person name="Vize P.D."/>
            <person name="Zorn A.M."/>
            <person name="Ito M."/>
            <person name="Marcotte E.M."/>
            <person name="Wallingford J.B."/>
            <person name="Ito Y."/>
            <person name="Asashima M."/>
            <person name="Ueno N."/>
            <person name="Matsuda Y."/>
            <person name="Veenstra G.J."/>
            <person name="Fujiyama A."/>
            <person name="Harland R.M."/>
            <person name="Taira M."/>
            <person name="Rokhsar D.S."/>
        </authorList>
    </citation>
    <scope>NUCLEOTIDE SEQUENCE [LARGE SCALE GENOMIC DNA]</scope>
    <source>
        <strain>J</strain>
    </source>
</reference>
<reference key="2">
    <citation type="submission" date="2005-10" db="EMBL/GenBank/DDBJ databases">
        <authorList>
            <consortium name="NIH - Xenopus Gene Collection (XGC) project"/>
        </authorList>
    </citation>
    <scope>NUCLEOTIDE SEQUENCE [LARGE SCALE MRNA]</scope>
    <source>
        <tissue>Embryo</tissue>
    </source>
</reference>
<reference key="3">
    <citation type="journal article" date="2018" name="Nature">
        <title>Nuclear ARP2/3 drives DNA break clustering for homology-directed repair.</title>
        <authorList>
            <person name="Schrank B.R."/>
            <person name="Aparicio T."/>
            <person name="Li Y."/>
            <person name="Chang W."/>
            <person name="Chait B.T."/>
            <person name="Gundersen G.G."/>
            <person name="Gottesman M.E."/>
            <person name="Gautier J."/>
        </authorList>
    </citation>
    <scope>SUBCELLULAR LOCATION</scope>
    <scope>IDENTIFICATION IN THE ARP2/3 COMPLEX</scope>
    <scope>IDENTIFICATION BY MASS SPECTROMETRY</scope>
</reference>
<accession>Q8AVT9</accession>
<name>AR1AA_XENLA</name>
<proteinExistence type="evidence at protein level"/>
<sequence>MSLHQFLLEPISCHAWNKDLTQIAISPNNHEVHIYKKSGDQWVKGHELKEHNGHITGIDWAPKSDRIVTCGADRNAYVWSQKDGVWKPTLVILRINRAATFVKWSPLENKFAVGSGARLISVCYFESENDWWVSKHIKKPIRSTVLSLDWHPNNVLLAAGSCDFKTRVFSAYIKEVDEKPASTPWGSKMPFGQMMAEFGGVSSGGWVHSVSFSASGNKLAWVSHDSTVSVADASKNMSVSQLKTEFLPLLSVIFVSENSLIAAGHDCCPMLFTYDEHGSLTFVSKLDIPKQSTQRNISAMERFRNMDKRATTEDRNTTLETLHQNSITQVSIYDGDKTECRKFCTTGIDGAMTIWDFKTLESYIQGLKIM</sequence>
<evidence type="ECO:0000250" key="1">
    <source>
        <dbReference type="UniProtKB" id="Q92747"/>
    </source>
</evidence>
<evidence type="ECO:0000255" key="2"/>
<evidence type="ECO:0000269" key="3">
    <source>
    </source>
</evidence>
<evidence type="ECO:0000305" key="4"/>
<evidence type="ECO:0000305" key="5">
    <source>
    </source>
</evidence>
<evidence type="ECO:0000312" key="6">
    <source>
        <dbReference type="EMBL" id="AAH41267.1"/>
    </source>
</evidence>
<evidence type="ECO:0000312" key="7">
    <source>
        <dbReference type="EMBL" id="OCT61420.1"/>
    </source>
</evidence>